<name>TBR1_HUMAN</name>
<organism>
    <name type="scientific">Homo sapiens</name>
    <name type="common">Human</name>
    <dbReference type="NCBI Taxonomy" id="9606"/>
    <lineage>
        <taxon>Eukaryota</taxon>
        <taxon>Metazoa</taxon>
        <taxon>Chordata</taxon>
        <taxon>Craniata</taxon>
        <taxon>Vertebrata</taxon>
        <taxon>Euteleostomi</taxon>
        <taxon>Mammalia</taxon>
        <taxon>Eutheria</taxon>
        <taxon>Euarchontoglires</taxon>
        <taxon>Primates</taxon>
        <taxon>Haplorrhini</taxon>
        <taxon>Catarrhini</taxon>
        <taxon>Hominidae</taxon>
        <taxon>Homo</taxon>
    </lineage>
</organism>
<sequence length="682" mass="74053">MQLEHCLSPSIMLSKKFLNVSSSYPHSGGSELVLHDHPIISTTDNLERSSPLKKITRGMTNQSDTDNFPDSKDSPGDVQRSKLSPVLDGVSELRHSFDGSAADRYLLSQSSQPQSAATAPSAMFPYPGQHGPAHPAFSIGSPSRYMAHHPVITNGAYNSLLSNSSPQGYPTAGYPYPQQYGHSYQGAPFYQFSSTQPGLVPGKAQVYLCNRPLWLKFHRHQTEMIITKQGRRMFPFLSFNISGLDPTAHYNIFVDVILADPNHWRFQGGKWVPCGKADTNVQGNRVYMHPDSPNTGAHWMRQEISFGKLKLTNNKGASNNNGQMVVLQSLHKYQPRLHVVEVNEDGTEDTSQPGRVQTFTFPETQFIAVTAYQNTDITQLKIDHNPFAKGFRDNYDTIYTGCDMDRLTPSPNDSPRSQIVPGARYAMAGSFLQDQFVSNYAKARFHPGAGAGPGPGTDRSVPHTNGLLSPQQAEDPGAPSPQRWFVTPANNRLDFAASAYDTATDFAGNAATLLSYAAAGVKALPLQAAGCTGRPLGYYADPSGWGARSPPQYCGTKSGSVLPCWPNSAAAAARMAGANPYLGEEAEGLAAERSPLPPGAAEDAKPKDLSDSSWIETPSSIKSIDSSDSGIYEQAKRRRISPADTPVSESSSPLKSEVLAQRDCEKNCAKDISGYYGFYSHS</sequence>
<comment type="function">
    <text evidence="1 7 11">Transcriptional repressor involved in multiple aspects of cortical development, including neuronal migration, laminar and areal identity, and axonal projection (PubMed:25232744, PubMed:30250039). As transcriptional repressor of FEZF2, it blocks the formation of the corticospinal (CS) tract from layer 6 projection neurons, thereby restricting the origin of CS axons specifically to layer 5 neurons (By similarity).</text>
</comment>
<comment type="subunit">
    <text evidence="1 7 11">Homodimer (PubMed:25232744). Part of a complex containing CASK, TBR1 and TSPYL2; may modulate gene expression in response to neuronal synaptic activity (By similarity). Interacts with FOXP2 (PubMed:25232744, PubMed:30250039). Interacts with FOXP1 (PubMed:30250039). Interacts with BCL11A (PubMed:30250039).</text>
</comment>
<comment type="interaction">
    <interactant intactId="EBI-1047158">
        <id>Q16650</id>
    </interactant>
    <interactant intactId="EBI-77613">
        <id>P05067</id>
        <label>APP</label>
    </interactant>
    <organismsDiffer>false</organismsDiffer>
    <experiments>3</experiments>
</comment>
<comment type="interaction">
    <interactant intactId="EBI-1047158">
        <id>Q16650</id>
    </interactant>
    <interactant intactId="EBI-17264467">
        <id>P05067-2</id>
        <label>APP</label>
    </interactant>
    <organismsDiffer>false</organismsDiffer>
    <experiments>3</experiments>
</comment>
<comment type="interaction">
    <interactant intactId="EBI-1047158">
        <id>Q16650</id>
    </interactant>
    <interactant intactId="EBI-930964">
        <id>P54253</id>
        <label>ATXN1</label>
    </interactant>
    <organismsDiffer>false</organismsDiffer>
    <experiments>7</experiments>
</comment>
<comment type="interaction">
    <interactant intactId="EBI-1047158">
        <id>Q16650</id>
    </interactant>
    <interactant intactId="EBI-466029">
        <id>P42858</id>
        <label>HTT</label>
    </interactant>
    <organismsDiffer>false</organismsDiffer>
    <experiments>12</experiments>
</comment>
<comment type="interaction">
    <interactant intactId="EBI-1047158">
        <id>Q16650</id>
    </interactant>
    <interactant intactId="EBI-21251460">
        <id>O60260-5</id>
        <label>PRKN</label>
    </interactant>
    <organismsDiffer>false</organismsDiffer>
    <experiments>6</experiments>
</comment>
<comment type="interaction">
    <interactant intactId="EBI-1047158">
        <id>Q16650</id>
    </interactant>
    <interactant intactId="EBI-985879">
        <id>P37840</id>
        <label>SNCA</label>
    </interactant>
    <organismsDiffer>false</organismsDiffer>
    <experiments>3</experiments>
</comment>
<comment type="subcellular location">
    <subcellularLocation>
        <location evidence="7 11">Nucleus</location>
    </subcellularLocation>
</comment>
<comment type="alternative products">
    <event type="alternative splicing"/>
    <isoform>
        <id>Q16650-1</id>
        <name>1</name>
        <sequence type="displayed"/>
    </isoform>
    <isoform>
        <id>Q16650-2</id>
        <name>2</name>
        <sequence type="described" ref="VSP_056591"/>
    </isoform>
</comment>
<comment type="tissue specificity">
    <text>Brain.</text>
</comment>
<comment type="disease" evidence="4 5 6 7 8 9 10 11">
    <disease id="DI-05442">
        <name>Intellectual developmental disorder with autism and speech delay</name>
        <acronym>IDDAS</acronym>
        <description>An autosomal dominant neurodevelopmental disorder characterized by varying degrees of intellectual disability, autism spectrum disorder, and language deficits.</description>
        <dbReference type="MIM" id="606053"/>
    </disease>
    <text>The disease is caused by variants affecting the gene represented in this entry.</text>
</comment>
<dbReference type="EMBL" id="U49250">
    <property type="protein sequence ID" value="AAA92010.1"/>
    <property type="molecule type" value="mRNA"/>
</dbReference>
<dbReference type="EMBL" id="AK297438">
    <property type="protein sequence ID" value="BAH12582.1"/>
    <property type="molecule type" value="mRNA"/>
</dbReference>
<dbReference type="EMBL" id="AK312567">
    <property type="protein sequence ID" value="BAG35462.1"/>
    <property type="molecule type" value="mRNA"/>
</dbReference>
<dbReference type="EMBL" id="AK315865">
    <property type="protein sequence ID" value="BAF98756.1"/>
    <property type="molecule type" value="mRNA"/>
</dbReference>
<dbReference type="EMBL" id="AK316161">
    <property type="protein sequence ID" value="BAH14532.1"/>
    <property type="molecule type" value="mRNA"/>
</dbReference>
<dbReference type="EMBL" id="AC009487">
    <property type="protein sequence ID" value="AAY15017.1"/>
    <property type="molecule type" value="Genomic_DNA"/>
</dbReference>
<dbReference type="EMBL" id="BC029289">
    <property type="protein sequence ID" value="AAH29289.1"/>
    <property type="molecule type" value="mRNA"/>
</dbReference>
<dbReference type="EMBL" id="BC104844">
    <property type="protein sequence ID" value="AAI04845.1"/>
    <property type="molecule type" value="mRNA"/>
</dbReference>
<dbReference type="EMBL" id="BC113418">
    <property type="protein sequence ID" value="AAI13419.1"/>
    <property type="molecule type" value="mRNA"/>
</dbReference>
<dbReference type="CCDS" id="CCDS33310.1">
    <molecule id="Q16650-1"/>
</dbReference>
<dbReference type="RefSeq" id="NP_006584.1">
    <molecule id="Q16650-1"/>
    <property type="nucleotide sequence ID" value="NM_006593.4"/>
</dbReference>
<dbReference type="SMR" id="Q16650"/>
<dbReference type="BioGRID" id="115942">
    <property type="interactions" value="114"/>
</dbReference>
<dbReference type="FunCoup" id="Q16650">
    <property type="interactions" value="1185"/>
</dbReference>
<dbReference type="IntAct" id="Q16650">
    <property type="interactions" value="98"/>
</dbReference>
<dbReference type="MINT" id="Q16650"/>
<dbReference type="STRING" id="9606.ENSP00000374205"/>
<dbReference type="GlyCosmos" id="Q16650">
    <property type="glycosylation" value="1 site, 1 glycan"/>
</dbReference>
<dbReference type="GlyGen" id="Q16650">
    <property type="glycosylation" value="2 sites, 1 O-linked glycan (1 site)"/>
</dbReference>
<dbReference type="iPTMnet" id="Q16650"/>
<dbReference type="PhosphoSitePlus" id="Q16650"/>
<dbReference type="SwissPalm" id="Q16650"/>
<dbReference type="BioMuta" id="TBR1"/>
<dbReference type="DMDM" id="2501122"/>
<dbReference type="jPOST" id="Q16650"/>
<dbReference type="MassIVE" id="Q16650"/>
<dbReference type="PaxDb" id="9606-ENSP00000374205"/>
<dbReference type="PeptideAtlas" id="Q16650"/>
<dbReference type="ProteomicsDB" id="2534"/>
<dbReference type="ProteomicsDB" id="61001">
    <molecule id="Q16650-1"/>
</dbReference>
<dbReference type="Antibodypedia" id="35331">
    <property type="antibodies" value="206 antibodies from 32 providers"/>
</dbReference>
<dbReference type="DNASU" id="10716"/>
<dbReference type="Ensembl" id="ENST00000389554.8">
    <molecule id="Q16650-1"/>
    <property type="protein sequence ID" value="ENSP00000374205.3"/>
    <property type="gene ID" value="ENSG00000136535.15"/>
</dbReference>
<dbReference type="Ensembl" id="ENST00000410035.1">
    <molecule id="Q16650-2"/>
    <property type="protein sequence ID" value="ENSP00000387023.1"/>
    <property type="gene ID" value="ENSG00000136535.15"/>
</dbReference>
<dbReference type="GeneID" id="10716"/>
<dbReference type="KEGG" id="hsa:10716"/>
<dbReference type="MANE-Select" id="ENST00000389554.8">
    <property type="protein sequence ID" value="ENSP00000374205.3"/>
    <property type="RefSeq nucleotide sequence ID" value="NM_006593.4"/>
    <property type="RefSeq protein sequence ID" value="NP_006584.1"/>
</dbReference>
<dbReference type="UCSC" id="uc002ubw.2">
    <molecule id="Q16650-1"/>
    <property type="organism name" value="human"/>
</dbReference>
<dbReference type="AGR" id="HGNC:11590"/>
<dbReference type="CTD" id="10716"/>
<dbReference type="DisGeNET" id="10716"/>
<dbReference type="GeneCards" id="TBR1"/>
<dbReference type="HGNC" id="HGNC:11590">
    <property type="gene designation" value="TBR1"/>
</dbReference>
<dbReference type="HPA" id="ENSG00000136535">
    <property type="expression patterns" value="Tissue enriched (brain)"/>
</dbReference>
<dbReference type="MalaCards" id="TBR1"/>
<dbReference type="MIM" id="604616">
    <property type="type" value="gene"/>
</dbReference>
<dbReference type="MIM" id="606053">
    <property type="type" value="phenotype"/>
</dbReference>
<dbReference type="neXtProt" id="NX_Q16650"/>
<dbReference type="OpenTargets" id="ENSG00000136535"/>
<dbReference type="Orphanet" id="1617">
    <property type="disease" value="Developmental delay-language impairment-dopa responsive dystonia-parkinsonism syndrome due to 2q24 microdeletion"/>
</dbReference>
<dbReference type="Orphanet" id="528084">
    <property type="disease" value="Non-specific syndromic intellectual disability"/>
</dbReference>
<dbReference type="PharmGKB" id="PA36354"/>
<dbReference type="VEuPathDB" id="HostDB:ENSG00000136535"/>
<dbReference type="eggNOG" id="KOG3585">
    <property type="taxonomic scope" value="Eukaryota"/>
</dbReference>
<dbReference type="GeneTree" id="ENSGT00940000156994"/>
<dbReference type="HOGENOM" id="CLU_014430_8_1_1"/>
<dbReference type="InParanoid" id="Q16650"/>
<dbReference type="OMA" id="NRALGYY"/>
<dbReference type="OrthoDB" id="7442607at2759"/>
<dbReference type="PAN-GO" id="Q16650">
    <property type="GO annotations" value="6 GO annotations based on evolutionary models"/>
</dbReference>
<dbReference type="PhylomeDB" id="Q16650"/>
<dbReference type="TreeFam" id="TF106341"/>
<dbReference type="PathwayCommons" id="Q16650"/>
<dbReference type="SignaLink" id="Q16650"/>
<dbReference type="SIGNOR" id="Q16650"/>
<dbReference type="BioGRID-ORCS" id="10716">
    <property type="hits" value="11 hits in 1163 CRISPR screens"/>
</dbReference>
<dbReference type="GeneWiki" id="TBR1"/>
<dbReference type="GenomeRNAi" id="10716"/>
<dbReference type="Pharos" id="Q16650">
    <property type="development level" value="Tbio"/>
</dbReference>
<dbReference type="PRO" id="PR:Q16650"/>
<dbReference type="Proteomes" id="UP000005640">
    <property type="component" value="Chromosome 2"/>
</dbReference>
<dbReference type="RNAct" id="Q16650">
    <property type="molecule type" value="protein"/>
</dbReference>
<dbReference type="Bgee" id="ENSG00000136535">
    <property type="expression patterns" value="Expressed in cortical plate and 39 other cell types or tissues"/>
</dbReference>
<dbReference type="ExpressionAtlas" id="Q16650">
    <property type="expression patterns" value="baseline and differential"/>
</dbReference>
<dbReference type="GO" id="GO:0000785">
    <property type="term" value="C:chromatin"/>
    <property type="evidence" value="ECO:0000318"/>
    <property type="project" value="GO_Central"/>
</dbReference>
<dbReference type="GO" id="GO:0005634">
    <property type="term" value="C:nucleus"/>
    <property type="evidence" value="ECO:0000314"/>
    <property type="project" value="UniProtKB"/>
</dbReference>
<dbReference type="GO" id="GO:0031490">
    <property type="term" value="F:chromatin DNA binding"/>
    <property type="evidence" value="ECO:0007669"/>
    <property type="project" value="Ensembl"/>
</dbReference>
<dbReference type="GO" id="GO:0003700">
    <property type="term" value="F:DNA-binding transcription factor activity"/>
    <property type="evidence" value="ECO:0000304"/>
    <property type="project" value="ProtInc"/>
</dbReference>
<dbReference type="GO" id="GO:0000981">
    <property type="term" value="F:DNA-binding transcription factor activity, RNA polymerase II-specific"/>
    <property type="evidence" value="ECO:0000318"/>
    <property type="project" value="GO_Central"/>
</dbReference>
<dbReference type="GO" id="GO:0019901">
    <property type="term" value="F:protein kinase binding"/>
    <property type="evidence" value="ECO:0007669"/>
    <property type="project" value="Ensembl"/>
</dbReference>
<dbReference type="GO" id="GO:0000978">
    <property type="term" value="F:RNA polymerase II cis-regulatory region sequence-specific DNA binding"/>
    <property type="evidence" value="ECO:0000318"/>
    <property type="project" value="GO_Central"/>
</dbReference>
<dbReference type="GO" id="GO:0021764">
    <property type="term" value="P:amygdala development"/>
    <property type="evidence" value="ECO:0007669"/>
    <property type="project" value="Ensembl"/>
</dbReference>
<dbReference type="GO" id="GO:0007420">
    <property type="term" value="P:brain development"/>
    <property type="evidence" value="ECO:0000304"/>
    <property type="project" value="ProtInc"/>
</dbReference>
<dbReference type="GO" id="GO:0001708">
    <property type="term" value="P:cell fate specification"/>
    <property type="evidence" value="ECO:0000318"/>
    <property type="project" value="GO_Central"/>
</dbReference>
<dbReference type="GO" id="GO:0021987">
    <property type="term" value="P:cerebral cortex development"/>
    <property type="evidence" value="ECO:0007669"/>
    <property type="project" value="Ensembl"/>
</dbReference>
<dbReference type="GO" id="GO:0006338">
    <property type="term" value="P:chromatin remodeling"/>
    <property type="evidence" value="ECO:0007669"/>
    <property type="project" value="Ensembl"/>
</dbReference>
<dbReference type="GO" id="GO:0021902">
    <property type="term" value="P:commitment of neuronal cell to specific neuron type in forebrain"/>
    <property type="evidence" value="ECO:0000318"/>
    <property type="project" value="GO_Central"/>
</dbReference>
<dbReference type="GO" id="GO:0001661">
    <property type="term" value="P:conditioned taste aversion"/>
    <property type="evidence" value="ECO:0007669"/>
    <property type="project" value="Ensembl"/>
</dbReference>
<dbReference type="GO" id="GO:0010467">
    <property type="term" value="P:gene expression"/>
    <property type="evidence" value="ECO:0007669"/>
    <property type="project" value="Ensembl"/>
</dbReference>
<dbReference type="GO" id="GO:0030902">
    <property type="term" value="P:hindbrain development"/>
    <property type="evidence" value="ECO:0007669"/>
    <property type="project" value="Ensembl"/>
</dbReference>
<dbReference type="GO" id="GO:0045892">
    <property type="term" value="P:negative regulation of DNA-templated transcription"/>
    <property type="evidence" value="ECO:0000314"/>
    <property type="project" value="UniProtKB"/>
</dbReference>
<dbReference type="GO" id="GO:0045944">
    <property type="term" value="P:positive regulation of transcription by RNA polymerase II"/>
    <property type="evidence" value="ECO:0007669"/>
    <property type="project" value="Ensembl"/>
</dbReference>
<dbReference type="GO" id="GO:1902667">
    <property type="term" value="P:regulation of axon guidance"/>
    <property type="evidence" value="ECO:0007669"/>
    <property type="project" value="Ensembl"/>
</dbReference>
<dbReference type="GO" id="GO:0010975">
    <property type="term" value="P:regulation of neuron projection development"/>
    <property type="evidence" value="ECO:0000318"/>
    <property type="project" value="GO_Central"/>
</dbReference>
<dbReference type="GO" id="GO:0006357">
    <property type="term" value="P:regulation of transcription by RNA polymerase II"/>
    <property type="evidence" value="ECO:0000318"/>
    <property type="project" value="GO_Central"/>
</dbReference>
<dbReference type="GO" id="GO:0010092">
    <property type="term" value="P:specification of animal organ identity"/>
    <property type="evidence" value="ECO:0007669"/>
    <property type="project" value="Ensembl"/>
</dbReference>
<dbReference type="CDD" id="cd20204">
    <property type="entry name" value="T-box_TBR1"/>
    <property type="match status" value="1"/>
</dbReference>
<dbReference type="FunFam" id="2.60.40.820:FF:000004">
    <property type="entry name" value="T-box, brain 1"/>
    <property type="match status" value="1"/>
</dbReference>
<dbReference type="Gene3D" id="2.60.40.820">
    <property type="entry name" value="Transcription factor, T-box"/>
    <property type="match status" value="1"/>
</dbReference>
<dbReference type="InterPro" id="IPR008967">
    <property type="entry name" value="p53-like_TF_DNA-bd_sf"/>
</dbReference>
<dbReference type="InterPro" id="IPR032385">
    <property type="entry name" value="T-box_assoc"/>
</dbReference>
<dbReference type="InterPro" id="IPR046360">
    <property type="entry name" value="T-box_DNA-bd"/>
</dbReference>
<dbReference type="InterPro" id="IPR036960">
    <property type="entry name" value="T-box_sf"/>
</dbReference>
<dbReference type="InterPro" id="IPR001699">
    <property type="entry name" value="TF_T-box"/>
</dbReference>
<dbReference type="InterPro" id="IPR018186">
    <property type="entry name" value="TF_T-box_CS"/>
</dbReference>
<dbReference type="PANTHER" id="PTHR11267:SF88">
    <property type="entry name" value="T-BOX BRAIN PROTEIN 1"/>
    <property type="match status" value="1"/>
</dbReference>
<dbReference type="PANTHER" id="PTHR11267">
    <property type="entry name" value="T-BOX PROTEIN-RELATED"/>
    <property type="match status" value="1"/>
</dbReference>
<dbReference type="Pfam" id="PF00907">
    <property type="entry name" value="T-box"/>
    <property type="match status" value="1"/>
</dbReference>
<dbReference type="Pfam" id="PF16176">
    <property type="entry name" value="T-box_assoc"/>
    <property type="match status" value="1"/>
</dbReference>
<dbReference type="PRINTS" id="PR00937">
    <property type="entry name" value="TBOX"/>
</dbReference>
<dbReference type="SMART" id="SM00425">
    <property type="entry name" value="TBOX"/>
    <property type="match status" value="1"/>
</dbReference>
<dbReference type="SUPFAM" id="SSF49417">
    <property type="entry name" value="p53-like transcription factors"/>
    <property type="match status" value="1"/>
</dbReference>
<dbReference type="PROSITE" id="PS01283">
    <property type="entry name" value="TBOX_1"/>
    <property type="match status" value="1"/>
</dbReference>
<dbReference type="PROSITE" id="PS01264">
    <property type="entry name" value="TBOX_2"/>
    <property type="match status" value="1"/>
</dbReference>
<dbReference type="PROSITE" id="PS50252">
    <property type="entry name" value="TBOX_3"/>
    <property type="match status" value="1"/>
</dbReference>
<evidence type="ECO:0000250" key="1">
    <source>
        <dbReference type="UniProtKB" id="Q64336"/>
    </source>
</evidence>
<evidence type="ECO:0000255" key="2">
    <source>
        <dbReference type="PROSITE-ProRule" id="PRU00201"/>
    </source>
</evidence>
<evidence type="ECO:0000256" key="3">
    <source>
        <dbReference type="SAM" id="MobiDB-lite"/>
    </source>
</evidence>
<evidence type="ECO:0000269" key="4">
    <source>
    </source>
</evidence>
<evidence type="ECO:0000269" key="5">
    <source>
    </source>
</evidence>
<evidence type="ECO:0000269" key="6">
    <source>
    </source>
</evidence>
<evidence type="ECO:0000269" key="7">
    <source>
    </source>
</evidence>
<evidence type="ECO:0000269" key="8">
    <source>
    </source>
</evidence>
<evidence type="ECO:0000269" key="9">
    <source>
    </source>
</evidence>
<evidence type="ECO:0000269" key="10">
    <source>
    </source>
</evidence>
<evidence type="ECO:0000269" key="11">
    <source>
    </source>
</evidence>
<evidence type="ECO:0000303" key="12">
    <source>
    </source>
</evidence>
<evidence type="ECO:0000305" key="13"/>
<gene>
    <name type="primary">TBR1</name>
</gene>
<protein>
    <recommendedName>
        <fullName>T-box brain protein 1</fullName>
        <shortName>T-brain-1</shortName>
        <shortName>TBR-1</shortName>
    </recommendedName>
    <alternativeName>
        <fullName>TES-56</fullName>
    </alternativeName>
</protein>
<feature type="chain" id="PRO_0000184457" description="T-box brain protein 1">
    <location>
        <begin position="1"/>
        <end position="682"/>
    </location>
</feature>
<feature type="DNA-binding region" description="T-box" evidence="2">
    <location>
        <begin position="213"/>
        <end position="393"/>
    </location>
</feature>
<feature type="region of interest" description="Disordered" evidence="3">
    <location>
        <begin position="43"/>
        <end position="83"/>
    </location>
</feature>
<feature type="region of interest" description="Disordered" evidence="3">
    <location>
        <begin position="108"/>
        <end position="127"/>
    </location>
</feature>
<feature type="region of interest" description="Disordered" evidence="3">
    <location>
        <begin position="447"/>
        <end position="483"/>
    </location>
</feature>
<feature type="region of interest" description="Disordered" evidence="3">
    <location>
        <begin position="588"/>
        <end position="658"/>
    </location>
</feature>
<feature type="compositionally biased region" description="Polar residues" evidence="3">
    <location>
        <begin position="58"/>
        <end position="68"/>
    </location>
</feature>
<feature type="compositionally biased region" description="Low complexity" evidence="3">
    <location>
        <begin position="108"/>
        <end position="122"/>
    </location>
</feature>
<feature type="compositionally biased region" description="Polar residues" evidence="3">
    <location>
        <begin position="462"/>
        <end position="472"/>
    </location>
</feature>
<feature type="compositionally biased region" description="Low complexity" evidence="3">
    <location>
        <begin position="619"/>
        <end position="629"/>
    </location>
</feature>
<feature type="modified residue" description="Phosphothreonine" evidence="1">
    <location>
        <position position="408"/>
    </location>
</feature>
<feature type="modified residue" description="Phosphoserine" evidence="1">
    <location>
        <position position="410"/>
    </location>
</feature>
<feature type="modified residue" description="Phosphoserine" evidence="1">
    <location>
        <position position="594"/>
    </location>
</feature>
<feature type="modified residue" description="Phosphoserine" evidence="1">
    <location>
        <position position="641"/>
    </location>
</feature>
<feature type="splice variant" id="VSP_056591" description="In isoform 2." evidence="12">
    <location>
        <begin position="1"/>
        <end position="287"/>
    </location>
</feature>
<feature type="sequence variant" id="VAR_081757" description="In IDDAS; uncertain significance; does not affect nuclear localization; no effect on transcriptional repression of FEZF2; does not affect homodimerization; does not affect interaction with FOXP2; dbSNP:rs771354583." evidence="7">
    <original>Q</original>
    <variation>E</variation>
    <location>
        <position position="178"/>
    </location>
</feature>
<feature type="sequence variant" id="VAR_081758" description="In IDDAS; de novo variant; localizes to the nucleus but forms abnormal aggregates; no effect on transcriptional repression of FEZF2; does not affect homodimerization; abolishes interaction with FOXP2; does not affect interaction with BCL11A; dbSNP:rs1553510219." evidence="6 7 10">
    <original>K</original>
    <variation>E</variation>
    <location>
        <position position="228"/>
    </location>
</feature>
<feature type="sequence variant" id="VAR_081759" description="In IDDAS; de novo variant; localizes to the nucleus but forms abnormal aggregates; no effect on transcriptional repression of FEZF2; does not affect homodimerization; severely decreased interaction with FOXP2; loss of interaction with FOXP1; does not affect interaction with BCL11A; dbSNP:rs1559060428." evidence="9 10 11">
    <original>W</original>
    <variation>C</variation>
    <location>
        <position position="271"/>
    </location>
</feature>
<feature type="sequence variant" id="VAR_078646" description="In IDDAS; de novo variant; does not affect nuclear localization; no effect on transcriptional repression of FEZF2; does not affect homodimerization; does not affect interaction with FOXP2; does not affect interaction with BCL11A; dbSNP:rs1553510301." evidence="8 11">
    <original>W</original>
    <variation>R</variation>
    <location>
        <position position="271"/>
    </location>
</feature>
<feature type="sequence variant" id="VAR_052264" description="In dbSNP:rs12994035.">
    <original>H</original>
    <variation>Q</variation>
    <location>
        <position position="289"/>
    </location>
</feature>
<feature type="sequence variant" id="VAR_081760" description="In IDDAS; uncertain significance; does not affect nuclear localization; no effect on transcriptional repression of FEZF2; does not affect homodimerization; does not affect interaction with FOXP2; does not affect interaction with BCL11A; dbSNP:rs147026901." evidence="4 7 11">
    <original>V</original>
    <variation>M</variation>
    <location>
        <position position="356"/>
    </location>
</feature>
<feature type="sequence variant" id="VAR_081761" description="In IDDAS; de novo variant; localizes to the nucleus but forms abnormal aggregates; no effect on transcriptional repression of FEZF2; does not affect homodimerization; abolishes interaction with FOXP2; does not affect interaction with BCL11A; dbSNP:rs1684182454." evidence="5 7 10 11">
    <original>N</original>
    <variation>H</variation>
    <location>
        <position position="374"/>
    </location>
</feature>
<feature type="sequence variant" id="VAR_081762" description="In IDDAS; de novo variant; localizes to the nucleus but forms abnormal aggregates; no effect on transcriptional repression of FEZF2; does not affect homodimerization; severely decreased interaction with FOXP2; loss of interaction with FOXP1; does not affect interaction with BCL11A; dbSNP:rs1553510677." evidence="10 11">
    <original>K</original>
    <variation>E</variation>
    <location>
        <position position="389"/>
    </location>
</feature>
<feature type="sequence variant" id="VAR_081763" description="In IDDAS; uncertain significance; does not affect nuclear localization; no effect on transcriptional repression of FEZF2; does not affect homodimerization; decreased interaction with FOXP2; loss of interaction with BCL11A; dbSNP:rs1173646549." evidence="7 11">
    <original>Q</original>
    <variation>R</variation>
    <location>
        <position position="418"/>
    </location>
</feature>
<feature type="sequence variant" id="VAR_081764" description="In IDDAS; uncertain significance; does not affect nuclear localization; no effect on transcriptional repression of FEZF2; does not affect homodimerization; does not affect interaction with FOXP2; does not affect interaction with BCL11A; dbSNP:rs1684275472." evidence="7 11">
    <original>P</original>
    <variation>R</variation>
    <location>
        <position position="542"/>
    </location>
</feature>
<feature type="mutagenesis site" description="Decreased interaction with BCL11A." evidence="11">
    <location>
        <begin position="394"/>
        <end position="682"/>
    </location>
</feature>
<feature type="mutagenesis site" description="No effect on interaction with BCL11A." evidence="11">
    <location>
        <begin position="568"/>
        <end position="682"/>
    </location>
</feature>
<feature type="sequence conflict" description="In Ref. 2; BAG35462." evidence="13" ref="2">
    <original>S</original>
    <variation>P</variation>
    <location>
        <position position="619"/>
    </location>
</feature>
<keyword id="KW-0025">Alternative splicing</keyword>
<keyword id="KW-1268">Autism spectrum disorder</keyword>
<keyword id="KW-0225">Disease variant</keyword>
<keyword id="KW-0238">DNA-binding</keyword>
<keyword id="KW-0991">Intellectual disability</keyword>
<keyword id="KW-0539">Nucleus</keyword>
<keyword id="KW-0597">Phosphoprotein</keyword>
<keyword id="KW-1267">Proteomics identification</keyword>
<keyword id="KW-1185">Reference proteome</keyword>
<keyword id="KW-0804">Transcription</keyword>
<keyword id="KW-0805">Transcription regulation</keyword>
<accession>Q16650</accession>
<accession>B0AZS4</accession>
<accession>B2R6G5</accession>
<accession>Q14DC5</accession>
<accession>Q53TH0</accession>
<accession>Q56A81</accession>
<reference key="1">
    <citation type="journal article" date="1995" name="Neuron">
        <title>T-brain-1: a homolog of Brachyury whose expression defines molecularly distinct domains within the cerebral cortex.</title>
        <authorList>
            <person name="Bulfone A."/>
            <person name="Smiga S.M."/>
            <person name="Shimamura K."/>
            <person name="Peterson A."/>
            <person name="Puelles L."/>
            <person name="Rubenstein J.L.R."/>
        </authorList>
    </citation>
    <scope>NUCLEOTIDE SEQUENCE [MRNA] (ISOFORM 1)</scope>
    <source>
        <tissue>Fetal brain</tissue>
    </source>
</reference>
<reference key="2">
    <citation type="journal article" date="2004" name="Nat. Genet.">
        <title>Complete sequencing and characterization of 21,243 full-length human cDNAs.</title>
        <authorList>
            <person name="Ota T."/>
            <person name="Suzuki Y."/>
            <person name="Nishikawa T."/>
            <person name="Otsuki T."/>
            <person name="Sugiyama T."/>
            <person name="Irie R."/>
            <person name="Wakamatsu A."/>
            <person name="Hayashi K."/>
            <person name="Sato H."/>
            <person name="Nagai K."/>
            <person name="Kimura K."/>
            <person name="Makita H."/>
            <person name="Sekine M."/>
            <person name="Obayashi M."/>
            <person name="Nishi T."/>
            <person name="Shibahara T."/>
            <person name="Tanaka T."/>
            <person name="Ishii S."/>
            <person name="Yamamoto J."/>
            <person name="Saito K."/>
            <person name="Kawai Y."/>
            <person name="Isono Y."/>
            <person name="Nakamura Y."/>
            <person name="Nagahari K."/>
            <person name="Murakami K."/>
            <person name="Yasuda T."/>
            <person name="Iwayanagi T."/>
            <person name="Wagatsuma M."/>
            <person name="Shiratori A."/>
            <person name="Sudo H."/>
            <person name="Hosoiri T."/>
            <person name="Kaku Y."/>
            <person name="Kodaira H."/>
            <person name="Kondo H."/>
            <person name="Sugawara M."/>
            <person name="Takahashi M."/>
            <person name="Kanda K."/>
            <person name="Yokoi T."/>
            <person name="Furuya T."/>
            <person name="Kikkawa E."/>
            <person name="Omura Y."/>
            <person name="Abe K."/>
            <person name="Kamihara K."/>
            <person name="Katsuta N."/>
            <person name="Sato K."/>
            <person name="Tanikawa M."/>
            <person name="Yamazaki M."/>
            <person name="Ninomiya K."/>
            <person name="Ishibashi T."/>
            <person name="Yamashita H."/>
            <person name="Murakawa K."/>
            <person name="Fujimori K."/>
            <person name="Tanai H."/>
            <person name="Kimata M."/>
            <person name="Watanabe M."/>
            <person name="Hiraoka S."/>
            <person name="Chiba Y."/>
            <person name="Ishida S."/>
            <person name="Ono Y."/>
            <person name="Takiguchi S."/>
            <person name="Watanabe S."/>
            <person name="Yosida M."/>
            <person name="Hotuta T."/>
            <person name="Kusano J."/>
            <person name="Kanehori K."/>
            <person name="Takahashi-Fujii A."/>
            <person name="Hara H."/>
            <person name="Tanase T.-O."/>
            <person name="Nomura Y."/>
            <person name="Togiya S."/>
            <person name="Komai F."/>
            <person name="Hara R."/>
            <person name="Takeuchi K."/>
            <person name="Arita M."/>
            <person name="Imose N."/>
            <person name="Musashino K."/>
            <person name="Yuuki H."/>
            <person name="Oshima A."/>
            <person name="Sasaki N."/>
            <person name="Aotsuka S."/>
            <person name="Yoshikawa Y."/>
            <person name="Matsunawa H."/>
            <person name="Ichihara T."/>
            <person name="Shiohata N."/>
            <person name="Sano S."/>
            <person name="Moriya S."/>
            <person name="Momiyama H."/>
            <person name="Satoh N."/>
            <person name="Takami S."/>
            <person name="Terashima Y."/>
            <person name="Suzuki O."/>
            <person name="Nakagawa S."/>
            <person name="Senoh A."/>
            <person name="Mizoguchi H."/>
            <person name="Goto Y."/>
            <person name="Shimizu F."/>
            <person name="Wakebe H."/>
            <person name="Hishigaki H."/>
            <person name="Watanabe T."/>
            <person name="Sugiyama A."/>
            <person name="Takemoto M."/>
            <person name="Kawakami B."/>
            <person name="Yamazaki M."/>
            <person name="Watanabe K."/>
            <person name="Kumagai A."/>
            <person name="Itakura S."/>
            <person name="Fukuzumi Y."/>
            <person name="Fujimori Y."/>
            <person name="Komiyama M."/>
            <person name="Tashiro H."/>
            <person name="Tanigami A."/>
            <person name="Fujiwara T."/>
            <person name="Ono T."/>
            <person name="Yamada K."/>
            <person name="Fujii Y."/>
            <person name="Ozaki K."/>
            <person name="Hirao M."/>
            <person name="Ohmori Y."/>
            <person name="Kawabata A."/>
            <person name="Hikiji T."/>
            <person name="Kobatake N."/>
            <person name="Inagaki H."/>
            <person name="Ikema Y."/>
            <person name="Okamoto S."/>
            <person name="Okitani R."/>
            <person name="Kawakami T."/>
            <person name="Noguchi S."/>
            <person name="Itoh T."/>
            <person name="Shigeta K."/>
            <person name="Senba T."/>
            <person name="Matsumura K."/>
            <person name="Nakajima Y."/>
            <person name="Mizuno T."/>
            <person name="Morinaga M."/>
            <person name="Sasaki M."/>
            <person name="Togashi T."/>
            <person name="Oyama M."/>
            <person name="Hata H."/>
            <person name="Watanabe M."/>
            <person name="Komatsu T."/>
            <person name="Mizushima-Sugano J."/>
            <person name="Satoh T."/>
            <person name="Shirai Y."/>
            <person name="Takahashi Y."/>
            <person name="Nakagawa K."/>
            <person name="Okumura K."/>
            <person name="Nagase T."/>
            <person name="Nomura N."/>
            <person name="Kikuchi H."/>
            <person name="Masuho Y."/>
            <person name="Yamashita R."/>
            <person name="Nakai K."/>
            <person name="Yada T."/>
            <person name="Nakamura Y."/>
            <person name="Ohara O."/>
            <person name="Isogai T."/>
            <person name="Sugano S."/>
        </authorList>
    </citation>
    <scope>NUCLEOTIDE SEQUENCE [LARGE SCALE MRNA] (ISOFORMS 1 AND 2)</scope>
    <source>
        <tissue>Brain</tissue>
    </source>
</reference>
<reference key="3">
    <citation type="journal article" date="2005" name="Nature">
        <title>Generation and annotation of the DNA sequences of human chromosomes 2 and 4.</title>
        <authorList>
            <person name="Hillier L.W."/>
            <person name="Graves T.A."/>
            <person name="Fulton R.S."/>
            <person name="Fulton L.A."/>
            <person name="Pepin K.H."/>
            <person name="Minx P."/>
            <person name="Wagner-McPherson C."/>
            <person name="Layman D."/>
            <person name="Wylie K."/>
            <person name="Sekhon M."/>
            <person name="Becker M.C."/>
            <person name="Fewell G.A."/>
            <person name="Delehaunty K.D."/>
            <person name="Miner T.L."/>
            <person name="Nash W.E."/>
            <person name="Kremitzki C."/>
            <person name="Oddy L."/>
            <person name="Du H."/>
            <person name="Sun H."/>
            <person name="Bradshaw-Cordum H."/>
            <person name="Ali J."/>
            <person name="Carter J."/>
            <person name="Cordes M."/>
            <person name="Harris A."/>
            <person name="Isak A."/>
            <person name="van Brunt A."/>
            <person name="Nguyen C."/>
            <person name="Du F."/>
            <person name="Courtney L."/>
            <person name="Kalicki J."/>
            <person name="Ozersky P."/>
            <person name="Abbott S."/>
            <person name="Armstrong J."/>
            <person name="Belter E.A."/>
            <person name="Caruso L."/>
            <person name="Cedroni M."/>
            <person name="Cotton M."/>
            <person name="Davidson T."/>
            <person name="Desai A."/>
            <person name="Elliott G."/>
            <person name="Erb T."/>
            <person name="Fronick C."/>
            <person name="Gaige T."/>
            <person name="Haakenson W."/>
            <person name="Haglund K."/>
            <person name="Holmes A."/>
            <person name="Harkins R."/>
            <person name="Kim K."/>
            <person name="Kruchowski S.S."/>
            <person name="Strong C.M."/>
            <person name="Grewal N."/>
            <person name="Goyea E."/>
            <person name="Hou S."/>
            <person name="Levy A."/>
            <person name="Martinka S."/>
            <person name="Mead K."/>
            <person name="McLellan M.D."/>
            <person name="Meyer R."/>
            <person name="Randall-Maher J."/>
            <person name="Tomlinson C."/>
            <person name="Dauphin-Kohlberg S."/>
            <person name="Kozlowicz-Reilly A."/>
            <person name="Shah N."/>
            <person name="Swearengen-Shahid S."/>
            <person name="Snider J."/>
            <person name="Strong J.T."/>
            <person name="Thompson J."/>
            <person name="Yoakum M."/>
            <person name="Leonard S."/>
            <person name="Pearman C."/>
            <person name="Trani L."/>
            <person name="Radionenko M."/>
            <person name="Waligorski J.E."/>
            <person name="Wang C."/>
            <person name="Rock S.M."/>
            <person name="Tin-Wollam A.-M."/>
            <person name="Maupin R."/>
            <person name="Latreille P."/>
            <person name="Wendl M.C."/>
            <person name="Yang S.-P."/>
            <person name="Pohl C."/>
            <person name="Wallis J.W."/>
            <person name="Spieth J."/>
            <person name="Bieri T.A."/>
            <person name="Berkowicz N."/>
            <person name="Nelson J.O."/>
            <person name="Osborne J."/>
            <person name="Ding L."/>
            <person name="Meyer R."/>
            <person name="Sabo A."/>
            <person name="Shotland Y."/>
            <person name="Sinha P."/>
            <person name="Wohldmann P.E."/>
            <person name="Cook L.L."/>
            <person name="Hickenbotham M.T."/>
            <person name="Eldred J."/>
            <person name="Williams D."/>
            <person name="Jones T.A."/>
            <person name="She X."/>
            <person name="Ciccarelli F.D."/>
            <person name="Izaurralde E."/>
            <person name="Taylor J."/>
            <person name="Schmutz J."/>
            <person name="Myers R.M."/>
            <person name="Cox D.R."/>
            <person name="Huang X."/>
            <person name="McPherson J.D."/>
            <person name="Mardis E.R."/>
            <person name="Clifton S.W."/>
            <person name="Warren W.C."/>
            <person name="Chinwalla A.T."/>
            <person name="Eddy S.R."/>
            <person name="Marra M.A."/>
            <person name="Ovcharenko I."/>
            <person name="Furey T.S."/>
            <person name="Miller W."/>
            <person name="Eichler E.E."/>
            <person name="Bork P."/>
            <person name="Suyama M."/>
            <person name="Torrents D."/>
            <person name="Waterston R.H."/>
            <person name="Wilson R.K."/>
        </authorList>
    </citation>
    <scope>NUCLEOTIDE SEQUENCE [LARGE SCALE GENOMIC DNA]</scope>
</reference>
<reference key="4">
    <citation type="journal article" date="2004" name="Genome Res.">
        <title>The status, quality, and expansion of the NIH full-length cDNA project: the Mammalian Gene Collection (MGC).</title>
        <authorList>
            <consortium name="The MGC Project Team"/>
        </authorList>
    </citation>
    <scope>NUCLEOTIDE SEQUENCE [LARGE SCALE MRNA] (ISOFORM 1)</scope>
    <source>
        <tissue>Brain</tissue>
    </source>
</reference>
<reference key="5">
    <citation type="journal article" date="2014" name="Nat. Commun.">
        <title>De novo TBR1 mutations in sporadic autism disrupt protein functions.</title>
        <authorList>
            <person name="Deriziotis P."/>
            <person name="O'Roak B.J."/>
            <person name="Graham S.A."/>
            <person name="Estruch S.B."/>
            <person name="Dimitropoulou D."/>
            <person name="Bernier R.A."/>
            <person name="Gerdts J."/>
            <person name="Shendure J."/>
            <person name="Eichler E.E."/>
            <person name="Fisher S.E."/>
        </authorList>
    </citation>
    <scope>FUNCTION</scope>
    <scope>SUBCELLULAR LOCATION</scope>
    <scope>HOMODIMERIZATION</scope>
    <scope>INTERACTION WITH FOXP2</scope>
    <scope>INVOLVEMENT IN IDDAS</scope>
    <scope>VARIANTS IDDAS GLU-178; GLU-228; ARG-418 AND ARG-542</scope>
    <scope>CHARACTERIZATION OF VARIANTS IDDAS GLU-178; GLU-228; MET-356; HIS-374; ARG-418 AND ARG-542</scope>
</reference>
<reference key="6">
    <citation type="journal article" date="2018" name="Eur. J. Med. Genet.">
        <title>Mutations in TBR1 gene leads to cortical malformations and intellectual disability.</title>
        <authorList>
            <person name="Vegas N."/>
            <person name="Cavallin M."/>
            <person name="Kleefstra T."/>
            <person name="de Boer L."/>
            <person name="Philbert M."/>
            <person name="Maillard C."/>
            <person name="Boddaert N."/>
            <person name="Munnich A."/>
            <person name="Hubert L."/>
            <person name="Bery A."/>
            <person name="Besmond C."/>
            <person name="Bahi-Buisson N."/>
        </authorList>
    </citation>
    <scope>INVOLVEMENT IN IDDAS</scope>
</reference>
<reference key="7">
    <citation type="journal article" date="2018" name="Sci. Rep.">
        <title>Functional characterization of TBR1 variants in neurodevelopmental disorder.</title>
        <authorList>
            <person name="den Hoed J."/>
            <person name="Sollis E."/>
            <person name="Venselaar H."/>
            <person name="Estruch S.B."/>
            <person name="Deriziotis P."/>
            <person name="Fisher S.E."/>
        </authorList>
    </citation>
    <scope>FUNCTION</scope>
    <scope>SUBCELLULAR LOCATION</scope>
    <scope>INTERACTION WITH FOXP1; FOXP2 AND BCL11A</scope>
    <scope>CHARACTERIZATION OF VARIANTS IDDAS GLU-228; ARG-271; CYS-271; MET-356; HIS-374; GLU-389; ARG-418 AND ARG-542</scope>
    <scope>MUTAGENESIS OF 394-ASN--SER-682 AND 568-SER--SER-682</scope>
</reference>
<reference key="8">
    <citation type="journal article" date="2003" name="Mol. Psychiatry">
        <title>Screening of nine candidate genes for autism on chromosome 2q reveals rare nonsynonymous variants in the cAMP-GEFII gene.</title>
        <authorList>
            <consortium name="International Molecular Genetic Study of Autism Consortium (IMGSAC)"/>
            <person name="Bacchelli E."/>
            <person name="Blasi F."/>
            <person name="Biondolillo M."/>
            <person name="Lamb J.A."/>
            <person name="Bonora E."/>
            <person name="Barnby G."/>
            <person name="Parr J."/>
            <person name="Beyer K.S."/>
            <person name="Klauck S.M."/>
            <person name="Poustka A."/>
            <person name="Bailey A.J."/>
            <person name="Monaco A.P."/>
            <person name="Maestrini E."/>
        </authorList>
    </citation>
    <scope>VARIANT IDDAS MET-356</scope>
</reference>
<reference key="9">
    <citation type="journal article" date="2012" name="Nature">
        <title>Patterns and rates of exonic de novo mutations in autism spectrum disorders.</title>
        <authorList>
            <person name="Neale B.M."/>
            <person name="Kou Y."/>
            <person name="Liu L."/>
            <person name="Ma'ayan A."/>
            <person name="Samocha K.E."/>
            <person name="Sabo A."/>
            <person name="Lin C.F."/>
            <person name="Stevens C."/>
            <person name="Wang L.S."/>
            <person name="Makarov V."/>
            <person name="Polak P."/>
            <person name="Yoon S."/>
            <person name="Maguire J."/>
            <person name="Crawford E.L."/>
            <person name="Campbell N.G."/>
            <person name="Geller E.T."/>
            <person name="Valladares O."/>
            <person name="Schafer C."/>
            <person name="Liu H."/>
            <person name="Zhao T."/>
            <person name="Cai G."/>
            <person name="Lihm J."/>
            <person name="Dannenfelser R."/>
            <person name="Jabado O."/>
            <person name="Peralta Z."/>
            <person name="Nagaswamy U."/>
            <person name="Muzny D."/>
            <person name="Reid J.G."/>
            <person name="Newsham I."/>
            <person name="Wu Y."/>
            <person name="Lewis L."/>
            <person name="Han Y."/>
            <person name="Voight B.F."/>
            <person name="Lim E."/>
            <person name="Rossin E."/>
            <person name="Kirby A."/>
            <person name="Flannick J."/>
            <person name="Fromer M."/>
            <person name="Shakir K."/>
            <person name="Fennell T."/>
            <person name="Garimella K."/>
            <person name="Banks E."/>
            <person name="Poplin R."/>
            <person name="Gabriel S."/>
            <person name="DePristo M."/>
            <person name="Wimbish J.R."/>
            <person name="Boone B.E."/>
            <person name="Levy S.E."/>
            <person name="Betancur C."/>
            <person name="Sunyaev S."/>
            <person name="Boerwinkle E."/>
            <person name="Buxbaum J.D."/>
            <person name="Cook E.H. Jr."/>
            <person name="Devlin B."/>
            <person name="Gibbs R.A."/>
            <person name="Roeder K."/>
            <person name="Schellenberg G.D."/>
            <person name="Sutcliffe J.S."/>
            <person name="Daly M.J."/>
        </authorList>
    </citation>
    <scope>VARIANT IDDAS HIS-374</scope>
</reference>
<reference key="10">
    <citation type="journal article" date="2012" name="Science">
        <title>Multiplex targeted sequencing identifies recurrently mutated genes in autism spectrum disorders.</title>
        <authorList>
            <person name="O'Roak B.J."/>
            <person name="Vives L."/>
            <person name="Fu W."/>
            <person name="Egertson J.D."/>
            <person name="Stanaway I.B."/>
            <person name="Phelps I.G."/>
            <person name="Carvill G."/>
            <person name="Kumar A."/>
            <person name="Lee C."/>
            <person name="Ankenman K."/>
            <person name="Munson J."/>
            <person name="Hiatt J.B."/>
            <person name="Turner E.H."/>
            <person name="Levy R."/>
            <person name="O'Day D.R."/>
            <person name="Krumm N."/>
            <person name="Coe B.P."/>
            <person name="Martin B.K."/>
            <person name="Borenstein E."/>
            <person name="Nickerson D.A."/>
            <person name="Mefford H.C."/>
            <person name="Doherty D."/>
            <person name="Akey J.M."/>
            <person name="Bernier R."/>
            <person name="Eichler E.E."/>
            <person name="Shendure J."/>
        </authorList>
    </citation>
    <scope>VARIANT IDDAS GLU-228</scope>
</reference>
<reference key="11">
    <citation type="journal article" date="2014" name="Nat. Commun.">
        <title>Recurrent de novo mutations implicate novel genes underlying simplex autism risk.</title>
        <authorList>
            <person name="O'Roak B.J."/>
            <person name="Stessman H.A."/>
            <person name="Boyle E.A."/>
            <person name="Witherspoon K.T."/>
            <person name="Martin B."/>
            <person name="Lee C."/>
            <person name="Vives L."/>
            <person name="Baker C."/>
            <person name="Hiatt J.B."/>
            <person name="Nickerson D.A."/>
            <person name="Bernier R."/>
            <person name="Shendure J."/>
            <person name="Eichler E.E."/>
        </authorList>
    </citation>
    <scope>VARIANTS IDDAS GLU-228; CYS-271; HIS-374 AND GLU-389</scope>
</reference>
<reference key="12">
    <citation type="journal article" date="2014" name="Nature">
        <title>Synaptic, transcriptional and chromatin genes disrupted in autism.</title>
        <authorList>
            <consortium name="DDD Study"/>
            <consortium name="Homozygosity Mapping Collaborative for Autism"/>
            <consortium name="UK10K Consortium"/>
            <person name="De Rubeis S."/>
            <person name="He X."/>
            <person name="Goldberg A.P."/>
            <person name="Poultney C.S."/>
            <person name="Samocha K."/>
            <person name="Cicek A.E."/>
            <person name="Kou Y."/>
            <person name="Liu L."/>
            <person name="Fromer M."/>
            <person name="Walker S."/>
            <person name="Singh T."/>
            <person name="Klei L."/>
            <person name="Kosmicki J."/>
            <person name="Shih-Chen F."/>
            <person name="Aleksic B."/>
            <person name="Biscaldi M."/>
            <person name="Bolton P.F."/>
            <person name="Brownfeld J.M."/>
            <person name="Cai J."/>
            <person name="Campbell N.G."/>
            <person name="Carracedo A."/>
            <person name="Chahrour M.H."/>
            <person name="Chiocchetti A.G."/>
            <person name="Coon H."/>
            <person name="Crawford E.L."/>
            <person name="Curran S.R."/>
            <person name="Dawson G."/>
            <person name="Duketis E."/>
            <person name="Fernandez B.A."/>
            <person name="Gallagher L."/>
            <person name="Geller E."/>
            <person name="Guter S.J."/>
            <person name="Hill R.S."/>
            <person name="Ionita-Laza J."/>
            <person name="Jimenz Gonzalez P."/>
            <person name="Kilpinen H."/>
            <person name="Klauck S.M."/>
            <person name="Kolevzon A."/>
            <person name="Lee I."/>
            <person name="Lei I."/>
            <person name="Lei J."/>
            <person name="Lehtimaeki T."/>
            <person name="Lin C.F."/>
            <person name="Ma'ayan A."/>
            <person name="Marshall C.R."/>
            <person name="McInnes A.L."/>
            <person name="Neale B."/>
            <person name="Owen M.J."/>
            <person name="Ozaki N."/>
            <person name="Parellada M."/>
            <person name="Parr J.R."/>
            <person name="Purcell S."/>
            <person name="Puura K."/>
            <person name="Rajagopalan D."/>
            <person name="Rehnstroem K."/>
            <person name="Reichenberg A."/>
            <person name="Sabo A."/>
            <person name="Sachse M."/>
            <person name="Sanders S.J."/>
            <person name="Schafer C."/>
            <person name="Schulte-Ruether M."/>
            <person name="Skuse D."/>
            <person name="Stevens C."/>
            <person name="Szatmari P."/>
            <person name="Tammimies K."/>
            <person name="Valladares O."/>
            <person name="Voran A."/>
            <person name="Li-San W."/>
            <person name="Weiss L.A."/>
            <person name="Willsey A.J."/>
            <person name="Yu T.W."/>
            <person name="Yuen R.K."/>
            <person name="Cook E.H."/>
            <person name="Freitag C.M."/>
            <person name="Gill M."/>
            <person name="Hultman C.M."/>
            <person name="Lehner T."/>
            <person name="Palotie A."/>
            <person name="Schellenberg G.D."/>
            <person name="Sklar P."/>
            <person name="State M.W."/>
            <person name="Sutcliffe J.S."/>
            <person name="Walsh C.A."/>
            <person name="Scherer S.W."/>
            <person name="Zwick M.E."/>
            <person name="Barett J.C."/>
            <person name="Cutler D.J."/>
            <person name="Roeder K."/>
            <person name="Devlin B."/>
            <person name="Daly M.J."/>
            <person name="Buxbaum J.D."/>
        </authorList>
    </citation>
    <scope>VARIANT IDDAS CYS-271</scope>
</reference>
<reference key="13">
    <citation type="journal article" date="2014" name="PLoS Genet.">
        <title>De novo mutations in moderate or severe intellectual disability.</title>
        <authorList>
            <person name="Hamdan F.F."/>
            <person name="Srour M."/>
            <person name="Capo-Chichi J.M."/>
            <person name="Daoud H."/>
            <person name="Nassif C."/>
            <person name="Patry L."/>
            <person name="Massicotte C."/>
            <person name="Ambalavanan A."/>
            <person name="Spiegelman D."/>
            <person name="Diallo O."/>
            <person name="Henrion E."/>
            <person name="Dionne-Laporte A."/>
            <person name="Fougerat A."/>
            <person name="Pshezhetsky A.V."/>
            <person name="Venkateswaran S."/>
            <person name="Rouleau G.A."/>
            <person name="Michaud J.L."/>
        </authorList>
    </citation>
    <scope>VARIANT IDDAS ARG-271</scope>
</reference>
<proteinExistence type="evidence at protein level"/>